<feature type="chain" id="PRO_0000211121" description="Segregation and condensation protein A">
    <location>
        <begin position="1"/>
        <end position="294"/>
    </location>
</feature>
<protein>
    <recommendedName>
        <fullName evidence="1">Segregation and condensation protein A</fullName>
    </recommendedName>
</protein>
<comment type="function">
    <text evidence="1">Participates in chromosomal partition during cell division. May act via the formation of a condensin-like complex containing Smc and ScpB that pull DNA away from mid-cell into both cell halves.</text>
</comment>
<comment type="subunit">
    <text evidence="1">Component of a cohesin-like complex composed of ScpA, ScpB and the Smc homodimer, in which ScpA and ScpB bind to the head domain of Smc. The presence of the three proteins is required for the association of the complex with DNA.</text>
</comment>
<comment type="subcellular location">
    <subcellularLocation>
        <location evidence="1">Cytoplasm</location>
    </subcellularLocation>
    <text evidence="1">Associated with two foci at the outer edges of the nucleoid region in young cells, and at four foci within both cell halves in older cells.</text>
</comment>
<comment type="similarity">
    <text evidence="1">Belongs to the ScpA family.</text>
</comment>
<accession>Q9PQE6</accession>
<proteinExistence type="inferred from homology"/>
<evidence type="ECO:0000255" key="1">
    <source>
        <dbReference type="HAMAP-Rule" id="MF_01805"/>
    </source>
</evidence>
<dbReference type="EMBL" id="AF222894">
    <property type="protein sequence ID" value="AAF30754.1"/>
    <property type="molecule type" value="Genomic_DNA"/>
</dbReference>
<dbReference type="SMR" id="Q9PQE6"/>
<dbReference type="STRING" id="273119.UU345"/>
<dbReference type="EnsemblBacteria" id="AAF30754">
    <property type="protein sequence ID" value="AAF30754"/>
    <property type="gene ID" value="UU345"/>
</dbReference>
<dbReference type="KEGG" id="uur:UU345"/>
<dbReference type="eggNOG" id="COG1354">
    <property type="taxonomic scope" value="Bacteria"/>
</dbReference>
<dbReference type="HOGENOM" id="CLU_933651_0_0_14"/>
<dbReference type="Proteomes" id="UP000000423">
    <property type="component" value="Chromosome"/>
</dbReference>
<dbReference type="GO" id="GO:0005737">
    <property type="term" value="C:cytoplasm"/>
    <property type="evidence" value="ECO:0007669"/>
    <property type="project" value="UniProtKB-SubCell"/>
</dbReference>
<dbReference type="GO" id="GO:0051301">
    <property type="term" value="P:cell division"/>
    <property type="evidence" value="ECO:0007669"/>
    <property type="project" value="UniProtKB-KW"/>
</dbReference>
<dbReference type="GO" id="GO:0007059">
    <property type="term" value="P:chromosome segregation"/>
    <property type="evidence" value="ECO:0007669"/>
    <property type="project" value="UniProtKB-UniRule"/>
</dbReference>
<dbReference type="GO" id="GO:0006260">
    <property type="term" value="P:DNA replication"/>
    <property type="evidence" value="ECO:0007669"/>
    <property type="project" value="UniProtKB-UniRule"/>
</dbReference>
<dbReference type="Gene3D" id="6.10.250.2410">
    <property type="match status" value="1"/>
</dbReference>
<dbReference type="HAMAP" id="MF_01805">
    <property type="entry name" value="ScpA"/>
    <property type="match status" value="1"/>
</dbReference>
<dbReference type="InterPro" id="IPR003768">
    <property type="entry name" value="ScpA"/>
</dbReference>
<dbReference type="PANTHER" id="PTHR33969">
    <property type="entry name" value="SEGREGATION AND CONDENSATION PROTEIN A"/>
    <property type="match status" value="1"/>
</dbReference>
<dbReference type="PANTHER" id="PTHR33969:SF2">
    <property type="entry name" value="SEGREGATION AND CONDENSATION PROTEIN A"/>
    <property type="match status" value="1"/>
</dbReference>
<dbReference type="Pfam" id="PF02616">
    <property type="entry name" value="SMC_ScpA"/>
    <property type="match status" value="1"/>
</dbReference>
<name>SCPA_UREPA</name>
<keyword id="KW-0131">Cell cycle</keyword>
<keyword id="KW-0132">Cell division</keyword>
<keyword id="KW-0159">Chromosome partition</keyword>
<keyword id="KW-0963">Cytoplasm</keyword>
<keyword id="KW-1185">Reference proteome</keyword>
<organism>
    <name type="scientific">Ureaplasma parvum serovar 3 (strain ATCC 700970)</name>
    <dbReference type="NCBI Taxonomy" id="273119"/>
    <lineage>
        <taxon>Bacteria</taxon>
        <taxon>Bacillati</taxon>
        <taxon>Mycoplasmatota</taxon>
        <taxon>Mycoplasmoidales</taxon>
        <taxon>Mycoplasmoidaceae</taxon>
        <taxon>Ureaplasma</taxon>
    </lineage>
</organism>
<reference key="1">
    <citation type="journal article" date="2000" name="Nature">
        <title>The complete sequence of the mucosal pathogen Ureaplasma urealyticum.</title>
        <authorList>
            <person name="Glass J.I."/>
            <person name="Lefkowitz E.J."/>
            <person name="Glass J.S."/>
            <person name="Heiner C.R."/>
            <person name="Chen E.Y."/>
            <person name="Cassell G.H."/>
        </authorList>
    </citation>
    <scope>NUCLEOTIDE SEQUENCE [LARGE SCALE GENOMIC DNA]</scope>
    <source>
        <strain>ATCC 700970</strain>
    </source>
</reference>
<gene>
    <name evidence="1" type="primary">scpA</name>
    <name type="ordered locus">UU345</name>
</gene>
<sequence>MNRMSEKQIQNSLFEYKFIDFNGPLDTLCVLIKQKRLDINNLDILELSKQYVNFVNQLIKTIDIDILGDHLAMASYLLELKTRMLMPTVDEKQIMSIEEDRQNLIDRLIEYNGYKNLSEHLKQRFEFRATMMDLPQQDYEQFYLKDAIYKPLPNHLDSMILKNIMDKIIYENELKNYKINKIKVHEYDVKQLEQLLLNYLKQSPNQQASMLSFFDIQAVIDKNKRFFAIMFLIILILINRNEILFEELDNDYLLKINIERVVDDYNSSSVEQAKNLTSNLTKDTIINFKGEDNE</sequence>